<sequence length="75" mass="8751">MPRPKPDDRSDNVEKLQEMVQNTIENIQKAEETMQFASPEEQEKIRAKNRRREEAIAAMRAEIRDEAAAREHGCQ</sequence>
<protein>
    <recommendedName>
        <fullName evidence="1">Small, acid-soluble spore protein Tlp</fullName>
    </recommendedName>
</protein>
<gene>
    <name evidence="1" type="primary">tlp</name>
    <name type="ordered locus">GK1561</name>
</gene>
<evidence type="ECO:0000255" key="1">
    <source>
        <dbReference type="HAMAP-Rule" id="MF_01506"/>
    </source>
</evidence>
<feature type="chain" id="PRO_0000221504" description="Small, acid-soluble spore protein Tlp">
    <location>
        <begin position="1"/>
        <end position="75"/>
    </location>
</feature>
<organism>
    <name type="scientific">Geobacillus kaustophilus (strain HTA426)</name>
    <dbReference type="NCBI Taxonomy" id="235909"/>
    <lineage>
        <taxon>Bacteria</taxon>
        <taxon>Bacillati</taxon>
        <taxon>Bacillota</taxon>
        <taxon>Bacilli</taxon>
        <taxon>Bacillales</taxon>
        <taxon>Anoxybacillaceae</taxon>
        <taxon>Geobacillus</taxon>
        <taxon>Geobacillus thermoleovorans group</taxon>
    </lineage>
</organism>
<reference key="1">
    <citation type="journal article" date="2004" name="Nucleic Acids Res.">
        <title>Thermoadaptation trait revealed by the genome sequence of thermophilic Geobacillus kaustophilus.</title>
        <authorList>
            <person name="Takami H."/>
            <person name="Takaki Y."/>
            <person name="Chee G.-J."/>
            <person name="Nishi S."/>
            <person name="Shimamura S."/>
            <person name="Suzuki H."/>
            <person name="Matsui S."/>
            <person name="Uchiyama I."/>
        </authorList>
    </citation>
    <scope>NUCLEOTIDE SEQUENCE [LARGE SCALE GENOMIC DNA]</scope>
    <source>
        <strain>HTA426</strain>
    </source>
</reference>
<keyword id="KW-1185">Reference proteome</keyword>
<keyword id="KW-0749">Sporulation</keyword>
<proteinExistence type="inferred from homology"/>
<comment type="subcellular location">
    <subcellularLocation>
        <location evidence="1">Spore core</location>
    </subcellularLocation>
</comment>
<comment type="induction">
    <text evidence="1">Expressed only in the forespore compartment of sporulating cells.</text>
</comment>
<comment type="similarity">
    <text evidence="1">Belongs to the Tlp family.</text>
</comment>
<accession>Q5KZP0</accession>
<name>TLP_GEOKA</name>
<dbReference type="EMBL" id="BA000043">
    <property type="protein sequence ID" value="BAD75846.1"/>
    <property type="molecule type" value="Genomic_DNA"/>
</dbReference>
<dbReference type="RefSeq" id="WP_011231057.1">
    <property type="nucleotide sequence ID" value="NC_006510.1"/>
</dbReference>
<dbReference type="SMR" id="Q5KZP0"/>
<dbReference type="STRING" id="235909.GK1561"/>
<dbReference type="KEGG" id="gka:GK1561"/>
<dbReference type="PATRIC" id="fig|235909.7.peg.1681"/>
<dbReference type="eggNOG" id="ENOG50330RR">
    <property type="taxonomic scope" value="Bacteria"/>
</dbReference>
<dbReference type="HOGENOM" id="CLU_178266_1_0_9"/>
<dbReference type="Proteomes" id="UP000001172">
    <property type="component" value="Chromosome"/>
</dbReference>
<dbReference type="GO" id="GO:0030436">
    <property type="term" value="P:asexual sporulation"/>
    <property type="evidence" value="ECO:0007669"/>
    <property type="project" value="UniProtKB-UniRule"/>
</dbReference>
<dbReference type="GO" id="GO:0030435">
    <property type="term" value="P:sporulation resulting in formation of a cellular spore"/>
    <property type="evidence" value="ECO:0007669"/>
    <property type="project" value="UniProtKB-KW"/>
</dbReference>
<dbReference type="HAMAP" id="MF_01506">
    <property type="entry name" value="Tlp"/>
    <property type="match status" value="1"/>
</dbReference>
<dbReference type="InterPro" id="IPR017524">
    <property type="entry name" value="SASP_thioredoxin-like"/>
</dbReference>
<dbReference type="NCBIfam" id="TIGR03090">
    <property type="entry name" value="SASP_tlp"/>
    <property type="match status" value="1"/>
</dbReference>
<dbReference type="Pfam" id="PF19824">
    <property type="entry name" value="Tlp"/>
    <property type="match status" value="1"/>
</dbReference>